<protein>
    <recommendedName>
        <fullName evidence="1">Mitochondrial adenyl nucleotide antiporter SLC25A24</fullName>
    </recommendedName>
    <alternativeName>
        <fullName evidence="1">Small calcium-binding mitochondrial carrier protein 1</fullName>
        <shortName evidence="1">SCaMC-1</shortName>
    </alternativeName>
    <alternativeName>
        <fullName>Solute carrier family 25 member 24</fullName>
    </alternativeName>
</protein>
<gene>
    <name type="primary">slc25a24</name>
    <name type="synonym">scamc1</name>
    <name type="ORF">si:ch211-63o20.9</name>
    <name type="ORF">zgc:92470</name>
</gene>
<proteinExistence type="evidence at transcript level"/>
<keyword id="KW-0050">Antiport</keyword>
<keyword id="KW-0106">Calcium</keyword>
<keyword id="KW-0472">Membrane</keyword>
<keyword id="KW-0479">Metal-binding</keyword>
<keyword id="KW-0496">Mitochondrion</keyword>
<keyword id="KW-0999">Mitochondrion inner membrane</keyword>
<keyword id="KW-1185">Reference proteome</keyword>
<keyword id="KW-0677">Repeat</keyword>
<keyword id="KW-0812">Transmembrane</keyword>
<keyword id="KW-1133">Transmembrane helix</keyword>
<keyword id="KW-0813">Transport</keyword>
<organism>
    <name type="scientific">Danio rerio</name>
    <name type="common">Zebrafish</name>
    <name type="synonym">Brachydanio rerio</name>
    <dbReference type="NCBI Taxonomy" id="7955"/>
    <lineage>
        <taxon>Eukaryota</taxon>
        <taxon>Metazoa</taxon>
        <taxon>Chordata</taxon>
        <taxon>Craniata</taxon>
        <taxon>Vertebrata</taxon>
        <taxon>Euteleostomi</taxon>
        <taxon>Actinopterygii</taxon>
        <taxon>Neopterygii</taxon>
        <taxon>Teleostei</taxon>
        <taxon>Ostariophysi</taxon>
        <taxon>Cypriniformes</taxon>
        <taxon>Danionidae</taxon>
        <taxon>Danioninae</taxon>
        <taxon>Danio</taxon>
    </lineage>
</organism>
<name>SCMC1_DANRE</name>
<comment type="function">
    <text evidence="1">Electroneutral antiporter that mediates the transport of adenyl nucleotides through the inner mitochondrial membrane. Originally identified as an ATP-magnesium/inorganic phosphate antiporter, it also acts as a broad specificity adenyl nucleotide antiporter. By regulating the mitochondrial matrix adenyl nucleotide pool could adapt to changing cellular energetic demands and indirectly regulate adenyl nucleotide-dependent metabolic pathways.</text>
</comment>
<comment type="catalytic activity">
    <reaction evidence="1">
        <text>Mg(2+)(out) + phosphate(in) + ATP(out) = Mg(2+)(in) + phosphate(out) + ATP(in)</text>
        <dbReference type="Rhea" id="RHEA:65840"/>
        <dbReference type="ChEBI" id="CHEBI:18420"/>
        <dbReference type="ChEBI" id="CHEBI:30616"/>
        <dbReference type="ChEBI" id="CHEBI:43474"/>
    </reaction>
</comment>
<comment type="catalytic activity">
    <reaction evidence="1">
        <text>ADP(out) + phosphate(in) + H(+)(out) = ADP(in) + phosphate(out) + H(+)(in)</text>
        <dbReference type="Rhea" id="RHEA:65844"/>
        <dbReference type="ChEBI" id="CHEBI:15378"/>
        <dbReference type="ChEBI" id="CHEBI:43474"/>
        <dbReference type="ChEBI" id="CHEBI:456216"/>
    </reaction>
</comment>
<comment type="catalytic activity">
    <reaction evidence="1">
        <text>AMP(out) + phosphate(in) = AMP(in) + phosphate(out)</text>
        <dbReference type="Rhea" id="RHEA:70259"/>
        <dbReference type="ChEBI" id="CHEBI:43474"/>
        <dbReference type="ChEBI" id="CHEBI:456215"/>
    </reaction>
</comment>
<comment type="catalytic activity">
    <reaction evidence="1">
        <text>phosphate(in) + ATP(out) + 2 H(+)(out) = phosphate(out) + ATP(in) + 2 H(+)(in)</text>
        <dbReference type="Rhea" id="RHEA:72035"/>
        <dbReference type="ChEBI" id="CHEBI:15378"/>
        <dbReference type="ChEBI" id="CHEBI:30616"/>
        <dbReference type="ChEBI" id="CHEBI:43474"/>
    </reaction>
</comment>
<comment type="catalytic activity">
    <reaction evidence="1">
        <text>dADP(in) + ADP(out) = dADP(out) + ADP(in)</text>
        <dbReference type="Rhea" id="RHEA:72855"/>
        <dbReference type="ChEBI" id="CHEBI:57667"/>
        <dbReference type="ChEBI" id="CHEBI:456216"/>
    </reaction>
</comment>
<comment type="catalytic activity">
    <reaction evidence="1">
        <text>Mg(2+)(in) + ADP(out) + ATP(in) + H(+)(out) = Mg(2+)(out) + ADP(in) + ATP(out) + H(+)(in)</text>
        <dbReference type="Rhea" id="RHEA:73659"/>
        <dbReference type="ChEBI" id="CHEBI:15378"/>
        <dbReference type="ChEBI" id="CHEBI:18420"/>
        <dbReference type="ChEBI" id="CHEBI:30616"/>
        <dbReference type="ChEBI" id="CHEBI:456216"/>
    </reaction>
</comment>
<comment type="catalytic activity">
    <reaction evidence="1">
        <text>ADP(out) + diphosphate(in) = ADP(in) + diphosphate(out)</text>
        <dbReference type="Rhea" id="RHEA:73671"/>
        <dbReference type="ChEBI" id="CHEBI:33019"/>
        <dbReference type="ChEBI" id="CHEBI:456216"/>
    </reaction>
</comment>
<comment type="catalytic activity">
    <reaction evidence="1">
        <text>dAMP(in) + ADP(out) + H(+)(out) = dAMP(out) + ADP(in) + H(+)(in)</text>
        <dbReference type="Rhea" id="RHEA:73675"/>
        <dbReference type="ChEBI" id="CHEBI:15378"/>
        <dbReference type="ChEBI" id="CHEBI:58245"/>
        <dbReference type="ChEBI" id="CHEBI:456216"/>
    </reaction>
</comment>
<comment type="catalytic activity">
    <reaction evidence="1">
        <text>3'-AMP(in) + ADP(out) + H(+)(out) = 3'-AMP(out) + ADP(in) + H(+)(in)</text>
        <dbReference type="Rhea" id="RHEA:73679"/>
        <dbReference type="ChEBI" id="CHEBI:15378"/>
        <dbReference type="ChEBI" id="CHEBI:60880"/>
        <dbReference type="ChEBI" id="CHEBI:456216"/>
    </reaction>
</comment>
<comment type="catalytic activity">
    <reaction evidence="1">
        <text>dAMP(out) + phosphate(in) = dAMP(in) + phosphate(out)</text>
        <dbReference type="Rhea" id="RHEA:73687"/>
        <dbReference type="ChEBI" id="CHEBI:43474"/>
        <dbReference type="ChEBI" id="CHEBI:58245"/>
    </reaction>
</comment>
<comment type="catalytic activity">
    <reaction evidence="1">
        <text>3'-AMP(out) + phosphate(in) = 3'-AMP(in) + phosphate(out)</text>
        <dbReference type="Rhea" id="RHEA:73691"/>
        <dbReference type="ChEBI" id="CHEBI:43474"/>
        <dbReference type="ChEBI" id="CHEBI:60880"/>
    </reaction>
</comment>
<comment type="catalytic activity">
    <reaction evidence="1">
        <text>dADP(out) + phosphate(in) + H(+)(out) = dADP(in) + phosphate(out) + H(+)(in)</text>
        <dbReference type="Rhea" id="RHEA:73695"/>
        <dbReference type="ChEBI" id="CHEBI:15378"/>
        <dbReference type="ChEBI" id="CHEBI:43474"/>
        <dbReference type="ChEBI" id="CHEBI:57667"/>
    </reaction>
</comment>
<comment type="activity regulation">
    <text evidence="1">Activated by an increase in cytosolic calcium levels that induce a conformational change of the N-terminal regulatory domain, uncapping the channel and allowing transport. Inhibited by bathophenanthroline, mersalyl, p-hydroxymercuribenzoate, bromcresol purple and tannic acid.</text>
</comment>
<comment type="subunit">
    <text evidence="1">Monomer.</text>
</comment>
<comment type="subcellular location">
    <subcellularLocation>
        <location evidence="1">Mitochondrion inner membrane</location>
        <topology evidence="2">Multi-pass membrane protein</topology>
    </subcellularLocation>
</comment>
<comment type="domain">
    <text evidence="1">The regulatory N-terminal domain/NTD formed of two pairs of fused calcium-binding EF-hands, binds calcium in the mitochondrial intermembrane space and regulates the antiporter activity of the transmembrane domain/TMD. In absence of calcium, the apo form of the N-terminal domain is intrinsically disordered and binds to the transmembrane domain, inhibiting the transporter activity. Binding of calcium leads to a major conformational change and abolishes the interaction with the transmembrane domain and the inhibition of the transporter activity.</text>
</comment>
<comment type="domain">
    <text evidence="1">The C-terminal mitochondrial carrier domain/transmembrane domain/TMD bears the transmembrane transporter activity.</text>
</comment>
<comment type="domain">
    <text evidence="1">Linker region/H9 could directly block the transport of substrates across the transporter.</text>
</comment>
<comment type="similarity">
    <text evidence="5">Belongs to the mitochondrial carrier (TC 2.A.29) family.</text>
</comment>
<sequence length="477" mass="53356">MHQLIRKFVFTESHCLEEEDNTKSFAELFEKLDVNKDGKVDVSELKTGLAAMGFSMGKGEAQKIVTSGDTDKDEGLDFEEFSKYLKEHEKKLRLTFKSLDKNEDGRVDAKEIQQSLKDLGINLSDKDAEKILHSIDVDGTMTLDWNEWREHFLFNPAEDLQQIIRYWKKSTVLDIGDSLTIPDEFTEEEKTTGMWWKQLAAGGVAGAVSRTGTAPLDRMKVFMQVHSSKTNKISLVNGFKQMIKEGGVASLWRGNGVNVIKIAPETAIKFMAYEQYKKLLSKDGGKVQSHERFMAGSLAGATAQTAIYPMEVMKTRLTLRKTGQYSGMFDCAKKILRKEGVKAFYKGYVPNILGIIPYAGIDLAVYETLKNTWLSHYAKDTANPGVLVLLGCGTISSTCGQLASYPLALIRTRMQAMASMEGSEQVSMSKLVKKIMQKEGFFGLYRGILPNFMKVIPAVSISYVVYEYMRSGLGISK</sequence>
<evidence type="ECO:0000250" key="1">
    <source>
        <dbReference type="UniProtKB" id="Q6NUK1"/>
    </source>
</evidence>
<evidence type="ECO:0000255" key="2"/>
<evidence type="ECO:0000255" key="3">
    <source>
        <dbReference type="PROSITE-ProRule" id="PRU00282"/>
    </source>
</evidence>
<evidence type="ECO:0000255" key="4">
    <source>
        <dbReference type="PROSITE-ProRule" id="PRU00448"/>
    </source>
</evidence>
<evidence type="ECO:0000305" key="5"/>
<feature type="chain" id="PRO_0000317597" description="Mitochondrial adenyl nucleotide antiporter SLC25A24">
    <location>
        <begin position="1"/>
        <end position="477"/>
    </location>
</feature>
<feature type="topological domain" description="Mitochondrial intermembrane" evidence="1">
    <location>
        <begin position="1"/>
        <end position="198"/>
    </location>
</feature>
<feature type="transmembrane region" description="Helical; Name=1" evidence="2">
    <location>
        <begin position="199"/>
        <end position="216"/>
    </location>
</feature>
<feature type="topological domain" description="Mitochondrial matrix" evidence="1">
    <location>
        <begin position="217"/>
        <end position="253"/>
    </location>
</feature>
<feature type="transmembrane region" description="Helical; Name=2" evidence="2">
    <location>
        <begin position="254"/>
        <end position="273"/>
    </location>
</feature>
<feature type="topological domain" description="Mitochondrial intermembrane" evidence="1">
    <location>
        <begin position="274"/>
        <end position="296"/>
    </location>
</feature>
<feature type="transmembrane region" description="Helical; Name=3" evidence="2">
    <location>
        <begin position="297"/>
        <end position="310"/>
    </location>
</feature>
<feature type="topological domain" description="Mitochondrial matrix" evidence="1">
    <location>
        <begin position="311"/>
        <end position="346"/>
    </location>
</feature>
<feature type="transmembrane region" description="Helical; Name=4" evidence="2">
    <location>
        <begin position="347"/>
        <end position="366"/>
    </location>
</feature>
<feature type="topological domain" description="Mitochondrial intermembrane" evidence="1">
    <location>
        <begin position="367"/>
        <end position="389"/>
    </location>
</feature>
<feature type="transmembrane region" description="Helical; Name=5" evidence="2">
    <location>
        <begin position="390"/>
        <end position="407"/>
    </location>
</feature>
<feature type="topological domain" description="Mitochondrial matrix" evidence="1">
    <location>
        <begin position="408"/>
        <end position="446"/>
    </location>
</feature>
<feature type="transmembrane region" description="Helical; Name=6" evidence="2">
    <location>
        <begin position="447"/>
        <end position="466"/>
    </location>
</feature>
<feature type="topological domain" description="Mitochondrial intermembrane" evidence="1">
    <location>
        <begin position="467"/>
        <end position="477"/>
    </location>
</feature>
<feature type="domain" description="EF-hand 1" evidence="4">
    <location>
        <begin position="20"/>
        <end position="55"/>
    </location>
</feature>
<feature type="domain" description="EF-hand 2" evidence="4">
    <location>
        <begin position="87"/>
        <end position="122"/>
    </location>
</feature>
<feature type="domain" description="EF-hand 3" evidence="4">
    <location>
        <begin position="123"/>
        <end position="158"/>
    </location>
</feature>
<feature type="repeat" description="Solcar 1" evidence="3">
    <location>
        <begin position="193"/>
        <end position="279"/>
    </location>
</feature>
<feature type="repeat" description="Solcar 2" evidence="3">
    <location>
        <begin position="287"/>
        <end position="372"/>
    </location>
</feature>
<feature type="repeat" description="Solcar 3" evidence="3">
    <location>
        <begin position="384"/>
        <end position="472"/>
    </location>
</feature>
<feature type="region of interest" description="Regulatory N-terminal domain" evidence="1">
    <location>
        <begin position="1"/>
        <end position="174"/>
    </location>
</feature>
<feature type="region of interest" description="Linker region" evidence="1">
    <location>
        <begin position="160"/>
        <end position="169"/>
    </location>
</feature>
<feature type="region of interest" description="C-terminal transmembrane transporter domain" evidence="1">
    <location>
        <begin position="175"/>
        <end position="477"/>
    </location>
</feature>
<feature type="binding site" evidence="4">
    <location>
        <position position="33"/>
    </location>
    <ligand>
        <name>Ca(2+)</name>
        <dbReference type="ChEBI" id="CHEBI:29108"/>
        <label>1</label>
    </ligand>
</feature>
<feature type="binding site" evidence="4">
    <location>
        <position position="35"/>
    </location>
    <ligand>
        <name>Ca(2+)</name>
        <dbReference type="ChEBI" id="CHEBI:29108"/>
        <label>1</label>
    </ligand>
</feature>
<feature type="binding site" evidence="4">
    <location>
        <position position="37"/>
    </location>
    <ligand>
        <name>Ca(2+)</name>
        <dbReference type="ChEBI" id="CHEBI:29108"/>
        <label>1</label>
    </ligand>
</feature>
<feature type="binding site" evidence="4">
    <location>
        <position position="39"/>
    </location>
    <ligand>
        <name>Ca(2+)</name>
        <dbReference type="ChEBI" id="CHEBI:29108"/>
        <label>1</label>
    </ligand>
</feature>
<feature type="binding site" evidence="4">
    <location>
        <position position="44"/>
    </location>
    <ligand>
        <name>Ca(2+)</name>
        <dbReference type="ChEBI" id="CHEBI:29108"/>
        <label>1</label>
    </ligand>
</feature>
<feature type="binding site" evidence="4">
    <location>
        <position position="69"/>
    </location>
    <ligand>
        <name>Ca(2+)</name>
        <dbReference type="ChEBI" id="CHEBI:29108"/>
        <label>2</label>
    </ligand>
</feature>
<feature type="binding site" evidence="1">
    <location>
        <position position="71"/>
    </location>
    <ligand>
        <name>Ca(2+)</name>
        <dbReference type="ChEBI" id="CHEBI:29108"/>
        <label>2</label>
    </ligand>
</feature>
<feature type="binding site" evidence="4">
    <location>
        <position position="73"/>
    </location>
    <ligand>
        <name>Ca(2+)</name>
        <dbReference type="ChEBI" id="CHEBI:29108"/>
        <label>2</label>
    </ligand>
</feature>
<feature type="binding site" evidence="4">
    <location>
        <position position="80"/>
    </location>
    <ligand>
        <name>Ca(2+)</name>
        <dbReference type="ChEBI" id="CHEBI:29108"/>
        <label>2</label>
    </ligand>
</feature>
<feature type="binding site" evidence="4">
    <location>
        <position position="100"/>
    </location>
    <ligand>
        <name>Ca(2+)</name>
        <dbReference type="ChEBI" id="CHEBI:29108"/>
        <label>3</label>
    </ligand>
</feature>
<feature type="binding site" evidence="4">
    <location>
        <position position="102"/>
    </location>
    <ligand>
        <name>Ca(2+)</name>
        <dbReference type="ChEBI" id="CHEBI:29108"/>
        <label>3</label>
    </ligand>
</feature>
<feature type="binding site" evidence="4">
    <location>
        <position position="104"/>
    </location>
    <ligand>
        <name>Ca(2+)</name>
        <dbReference type="ChEBI" id="CHEBI:29108"/>
        <label>3</label>
    </ligand>
</feature>
<feature type="binding site" evidence="4">
    <location>
        <position position="106"/>
    </location>
    <ligand>
        <name>Ca(2+)</name>
        <dbReference type="ChEBI" id="CHEBI:29108"/>
        <label>3</label>
    </ligand>
</feature>
<feature type="binding site" evidence="4">
    <location>
        <position position="111"/>
    </location>
    <ligand>
        <name>Ca(2+)</name>
        <dbReference type="ChEBI" id="CHEBI:29108"/>
        <label>3</label>
    </ligand>
</feature>
<feature type="binding site" evidence="1">
    <location>
        <position position="136"/>
    </location>
    <ligand>
        <name>Ca(2+)</name>
        <dbReference type="ChEBI" id="CHEBI:29108"/>
        <label>4</label>
    </ligand>
</feature>
<feature type="binding site" evidence="1">
    <location>
        <position position="138"/>
    </location>
    <ligand>
        <name>Ca(2+)</name>
        <dbReference type="ChEBI" id="CHEBI:29108"/>
        <label>4</label>
    </ligand>
</feature>
<feature type="binding site" evidence="1">
    <location>
        <position position="140"/>
    </location>
    <ligand>
        <name>Ca(2+)</name>
        <dbReference type="ChEBI" id="CHEBI:29108"/>
        <label>4</label>
    </ligand>
</feature>
<feature type="binding site" evidence="1">
    <location>
        <position position="142"/>
    </location>
    <ligand>
        <name>Ca(2+)</name>
        <dbReference type="ChEBI" id="CHEBI:29108"/>
        <label>4</label>
    </ligand>
</feature>
<feature type="binding site" evidence="1">
    <location>
        <position position="147"/>
    </location>
    <ligand>
        <name>Ca(2+)</name>
        <dbReference type="ChEBI" id="CHEBI:29108"/>
        <label>4</label>
    </ligand>
</feature>
<reference key="1">
    <citation type="journal article" date="2013" name="Nature">
        <title>The zebrafish reference genome sequence and its relationship to the human genome.</title>
        <authorList>
            <person name="Howe K."/>
            <person name="Clark M.D."/>
            <person name="Torroja C.F."/>
            <person name="Torrance J."/>
            <person name="Berthelot C."/>
            <person name="Muffato M."/>
            <person name="Collins J.E."/>
            <person name="Humphray S."/>
            <person name="McLaren K."/>
            <person name="Matthews L."/>
            <person name="McLaren S."/>
            <person name="Sealy I."/>
            <person name="Caccamo M."/>
            <person name="Churcher C."/>
            <person name="Scott C."/>
            <person name="Barrett J.C."/>
            <person name="Koch R."/>
            <person name="Rauch G.J."/>
            <person name="White S."/>
            <person name="Chow W."/>
            <person name="Kilian B."/>
            <person name="Quintais L.T."/>
            <person name="Guerra-Assuncao J.A."/>
            <person name="Zhou Y."/>
            <person name="Gu Y."/>
            <person name="Yen J."/>
            <person name="Vogel J.H."/>
            <person name="Eyre T."/>
            <person name="Redmond S."/>
            <person name="Banerjee R."/>
            <person name="Chi J."/>
            <person name="Fu B."/>
            <person name="Langley E."/>
            <person name="Maguire S.F."/>
            <person name="Laird G.K."/>
            <person name="Lloyd D."/>
            <person name="Kenyon E."/>
            <person name="Donaldson S."/>
            <person name="Sehra H."/>
            <person name="Almeida-King J."/>
            <person name="Loveland J."/>
            <person name="Trevanion S."/>
            <person name="Jones M."/>
            <person name="Quail M."/>
            <person name="Willey D."/>
            <person name="Hunt A."/>
            <person name="Burton J."/>
            <person name="Sims S."/>
            <person name="McLay K."/>
            <person name="Plumb B."/>
            <person name="Davis J."/>
            <person name="Clee C."/>
            <person name="Oliver K."/>
            <person name="Clark R."/>
            <person name="Riddle C."/>
            <person name="Elliot D."/>
            <person name="Threadgold G."/>
            <person name="Harden G."/>
            <person name="Ware D."/>
            <person name="Begum S."/>
            <person name="Mortimore B."/>
            <person name="Kerry G."/>
            <person name="Heath P."/>
            <person name="Phillimore B."/>
            <person name="Tracey A."/>
            <person name="Corby N."/>
            <person name="Dunn M."/>
            <person name="Johnson C."/>
            <person name="Wood J."/>
            <person name="Clark S."/>
            <person name="Pelan S."/>
            <person name="Griffiths G."/>
            <person name="Smith M."/>
            <person name="Glithero R."/>
            <person name="Howden P."/>
            <person name="Barker N."/>
            <person name="Lloyd C."/>
            <person name="Stevens C."/>
            <person name="Harley J."/>
            <person name="Holt K."/>
            <person name="Panagiotidis G."/>
            <person name="Lovell J."/>
            <person name="Beasley H."/>
            <person name="Henderson C."/>
            <person name="Gordon D."/>
            <person name="Auger K."/>
            <person name="Wright D."/>
            <person name="Collins J."/>
            <person name="Raisen C."/>
            <person name="Dyer L."/>
            <person name="Leung K."/>
            <person name="Robertson L."/>
            <person name="Ambridge K."/>
            <person name="Leongamornlert D."/>
            <person name="McGuire S."/>
            <person name="Gilderthorp R."/>
            <person name="Griffiths C."/>
            <person name="Manthravadi D."/>
            <person name="Nichol S."/>
            <person name="Barker G."/>
            <person name="Whitehead S."/>
            <person name="Kay M."/>
            <person name="Brown J."/>
            <person name="Murnane C."/>
            <person name="Gray E."/>
            <person name="Humphries M."/>
            <person name="Sycamore N."/>
            <person name="Barker D."/>
            <person name="Saunders D."/>
            <person name="Wallis J."/>
            <person name="Babbage A."/>
            <person name="Hammond S."/>
            <person name="Mashreghi-Mohammadi M."/>
            <person name="Barr L."/>
            <person name="Martin S."/>
            <person name="Wray P."/>
            <person name="Ellington A."/>
            <person name="Matthews N."/>
            <person name="Ellwood M."/>
            <person name="Woodmansey R."/>
            <person name="Clark G."/>
            <person name="Cooper J."/>
            <person name="Tromans A."/>
            <person name="Grafham D."/>
            <person name="Skuce C."/>
            <person name="Pandian R."/>
            <person name="Andrews R."/>
            <person name="Harrison E."/>
            <person name="Kimberley A."/>
            <person name="Garnett J."/>
            <person name="Fosker N."/>
            <person name="Hall R."/>
            <person name="Garner P."/>
            <person name="Kelly D."/>
            <person name="Bird C."/>
            <person name="Palmer S."/>
            <person name="Gehring I."/>
            <person name="Berger A."/>
            <person name="Dooley C.M."/>
            <person name="Ersan-Urun Z."/>
            <person name="Eser C."/>
            <person name="Geiger H."/>
            <person name="Geisler M."/>
            <person name="Karotki L."/>
            <person name="Kirn A."/>
            <person name="Konantz J."/>
            <person name="Konantz M."/>
            <person name="Oberlander M."/>
            <person name="Rudolph-Geiger S."/>
            <person name="Teucke M."/>
            <person name="Lanz C."/>
            <person name="Raddatz G."/>
            <person name="Osoegawa K."/>
            <person name="Zhu B."/>
            <person name="Rapp A."/>
            <person name="Widaa S."/>
            <person name="Langford C."/>
            <person name="Yang F."/>
            <person name="Schuster S.C."/>
            <person name="Carter N.P."/>
            <person name="Harrow J."/>
            <person name="Ning Z."/>
            <person name="Herrero J."/>
            <person name="Searle S.M."/>
            <person name="Enright A."/>
            <person name="Geisler R."/>
            <person name="Plasterk R.H."/>
            <person name="Lee C."/>
            <person name="Westerfield M."/>
            <person name="de Jong P.J."/>
            <person name="Zon L.I."/>
            <person name="Postlethwait J.H."/>
            <person name="Nusslein-Volhard C."/>
            <person name="Hubbard T.J."/>
            <person name="Roest Crollius H."/>
            <person name="Rogers J."/>
            <person name="Stemple D.L."/>
        </authorList>
    </citation>
    <scope>NUCLEOTIDE SEQUENCE [LARGE SCALE GENOMIC DNA]</scope>
    <source>
        <strain>Tuebingen</strain>
    </source>
</reference>
<reference key="2">
    <citation type="submission" date="2004-07" db="EMBL/GenBank/DDBJ databases">
        <authorList>
            <consortium name="NIH - Zebrafish Gene Collection (ZGC) project"/>
        </authorList>
    </citation>
    <scope>NUCLEOTIDE SEQUENCE [LARGE SCALE MRNA]</scope>
</reference>
<dbReference type="EMBL" id="BX279523">
    <property type="protein sequence ID" value="CAI12040.1"/>
    <property type="molecule type" value="Genomic_DNA"/>
</dbReference>
<dbReference type="EMBL" id="BC078435">
    <property type="protein sequence ID" value="AAH78435.1"/>
    <property type="molecule type" value="mRNA"/>
</dbReference>
<dbReference type="RefSeq" id="NP_001004606.1">
    <property type="nucleotide sequence ID" value="NM_001004606.1"/>
</dbReference>
<dbReference type="SMR" id="Q66L49"/>
<dbReference type="FunCoup" id="Q66L49">
    <property type="interactions" value="2438"/>
</dbReference>
<dbReference type="STRING" id="7955.ENSDARP00000033055"/>
<dbReference type="PaxDb" id="7955-ENSDARP00000033055"/>
<dbReference type="Ensembl" id="ENSDART00000033325">
    <property type="protein sequence ID" value="ENSDARP00000033055"/>
    <property type="gene ID" value="ENSDARG00000008568"/>
</dbReference>
<dbReference type="GeneID" id="447867"/>
<dbReference type="KEGG" id="dre:447867"/>
<dbReference type="AGR" id="ZFIN:ZDB-GENE-040912-183"/>
<dbReference type="CTD" id="29957"/>
<dbReference type="ZFIN" id="ZDB-GENE-040912-183">
    <property type="gene designation" value="slc25a24"/>
</dbReference>
<dbReference type="eggNOG" id="KOG0036">
    <property type="taxonomic scope" value="Eukaryota"/>
</dbReference>
<dbReference type="HOGENOM" id="CLU_015166_2_0_1"/>
<dbReference type="InParanoid" id="Q66L49"/>
<dbReference type="OMA" id="IANEEAQ"/>
<dbReference type="OrthoDB" id="270584at2759"/>
<dbReference type="PhylomeDB" id="Q66L49"/>
<dbReference type="TreeFam" id="TF313492"/>
<dbReference type="PRO" id="PR:Q66L49"/>
<dbReference type="Proteomes" id="UP000000437">
    <property type="component" value="Chromosome 20"/>
</dbReference>
<dbReference type="Bgee" id="ENSDARG00000008568">
    <property type="expression patterns" value="Expressed in zone of skin and 33 other cell types or tissues"/>
</dbReference>
<dbReference type="ExpressionAtlas" id="Q66L49">
    <property type="expression patterns" value="baseline"/>
</dbReference>
<dbReference type="GO" id="GO:0016020">
    <property type="term" value="C:membrane"/>
    <property type="evidence" value="ECO:0000250"/>
    <property type="project" value="UniProtKB"/>
</dbReference>
<dbReference type="GO" id="GO:0005743">
    <property type="term" value="C:mitochondrial inner membrane"/>
    <property type="evidence" value="ECO:0007669"/>
    <property type="project" value="UniProtKB-SubCell"/>
</dbReference>
<dbReference type="GO" id="GO:0005739">
    <property type="term" value="C:mitochondrion"/>
    <property type="evidence" value="ECO:0000250"/>
    <property type="project" value="UniProtKB"/>
</dbReference>
<dbReference type="GO" id="GO:0000295">
    <property type="term" value="F:adenine nucleotide transmembrane transporter activity"/>
    <property type="evidence" value="ECO:0000250"/>
    <property type="project" value="UniProtKB"/>
</dbReference>
<dbReference type="GO" id="GO:0140988">
    <property type="term" value="F:ADP:phosphate antiporter activity"/>
    <property type="evidence" value="ECO:0000250"/>
    <property type="project" value="UniProtKB"/>
</dbReference>
<dbReference type="GO" id="GO:0005347">
    <property type="term" value="F:ATP transmembrane transporter activity"/>
    <property type="evidence" value="ECO:0000318"/>
    <property type="project" value="GO_Central"/>
</dbReference>
<dbReference type="GO" id="GO:0140987">
    <property type="term" value="F:ATP:phosphate antiporter activity"/>
    <property type="evidence" value="ECO:0000250"/>
    <property type="project" value="UniProtKB"/>
</dbReference>
<dbReference type="GO" id="GO:0005509">
    <property type="term" value="F:calcium ion binding"/>
    <property type="evidence" value="ECO:0000250"/>
    <property type="project" value="UniProtKB"/>
</dbReference>
<dbReference type="GO" id="GO:0051503">
    <property type="term" value="P:adenine nucleotide transport"/>
    <property type="evidence" value="ECO:0000250"/>
    <property type="project" value="UniProtKB"/>
</dbReference>
<dbReference type="GO" id="GO:0015866">
    <property type="term" value="P:ADP transport"/>
    <property type="evidence" value="ECO:0000318"/>
    <property type="project" value="GO_Central"/>
</dbReference>
<dbReference type="GO" id="GO:0015867">
    <property type="term" value="P:ATP transport"/>
    <property type="evidence" value="ECO:0000318"/>
    <property type="project" value="GO_Central"/>
</dbReference>
<dbReference type="GO" id="GO:0071277">
    <property type="term" value="P:cellular response to calcium ion"/>
    <property type="evidence" value="ECO:0000250"/>
    <property type="project" value="UniProtKB"/>
</dbReference>
<dbReference type="GO" id="GO:1990544">
    <property type="term" value="P:mitochondrial ATP transmembrane transport"/>
    <property type="evidence" value="ECO:0000250"/>
    <property type="project" value="UniProtKB"/>
</dbReference>
<dbReference type="FunFam" id="1.10.238.10:FF:000028">
    <property type="entry name" value="Putative calcium-binding mitochondrial carrier protein scamc-2"/>
    <property type="match status" value="1"/>
</dbReference>
<dbReference type="FunFam" id="1.50.40.10:FF:000003">
    <property type="entry name" value="Putative calcium-binding mitochondrial carrier protein scamc-2"/>
    <property type="match status" value="1"/>
</dbReference>
<dbReference type="FunFam" id="1.10.238.10:FF:000168">
    <property type="entry name" value="Solute carrier family 25 member 24"/>
    <property type="match status" value="1"/>
</dbReference>
<dbReference type="Gene3D" id="1.10.238.10">
    <property type="entry name" value="EF-hand"/>
    <property type="match status" value="2"/>
</dbReference>
<dbReference type="Gene3D" id="1.50.40.10">
    <property type="entry name" value="Mitochondrial carrier domain"/>
    <property type="match status" value="1"/>
</dbReference>
<dbReference type="InterPro" id="IPR011992">
    <property type="entry name" value="EF-hand-dom_pair"/>
</dbReference>
<dbReference type="InterPro" id="IPR018247">
    <property type="entry name" value="EF_Hand_1_Ca_BS"/>
</dbReference>
<dbReference type="InterPro" id="IPR002048">
    <property type="entry name" value="EF_hand_dom"/>
</dbReference>
<dbReference type="InterPro" id="IPR002167">
    <property type="entry name" value="GDC-like"/>
</dbReference>
<dbReference type="InterPro" id="IPR002067">
    <property type="entry name" value="Mit_carrier"/>
</dbReference>
<dbReference type="InterPro" id="IPR018108">
    <property type="entry name" value="Mitochondrial_sb/sol_carrier"/>
</dbReference>
<dbReference type="InterPro" id="IPR023395">
    <property type="entry name" value="Mt_carrier_dom_sf"/>
</dbReference>
<dbReference type="PANTHER" id="PTHR24089">
    <property type="entry name" value="SOLUTE CARRIER FAMILY 25"/>
    <property type="match status" value="1"/>
</dbReference>
<dbReference type="Pfam" id="PF13499">
    <property type="entry name" value="EF-hand_7"/>
    <property type="match status" value="2"/>
</dbReference>
<dbReference type="Pfam" id="PF00153">
    <property type="entry name" value="Mito_carr"/>
    <property type="match status" value="3"/>
</dbReference>
<dbReference type="PRINTS" id="PR00928">
    <property type="entry name" value="GRAVESDC"/>
</dbReference>
<dbReference type="PRINTS" id="PR00926">
    <property type="entry name" value="MITOCARRIER"/>
</dbReference>
<dbReference type="SMART" id="SM00054">
    <property type="entry name" value="EFh"/>
    <property type="match status" value="3"/>
</dbReference>
<dbReference type="SUPFAM" id="SSF47473">
    <property type="entry name" value="EF-hand"/>
    <property type="match status" value="1"/>
</dbReference>
<dbReference type="SUPFAM" id="SSF103506">
    <property type="entry name" value="Mitochondrial carrier"/>
    <property type="match status" value="1"/>
</dbReference>
<dbReference type="PROSITE" id="PS00018">
    <property type="entry name" value="EF_HAND_1"/>
    <property type="match status" value="2"/>
</dbReference>
<dbReference type="PROSITE" id="PS50222">
    <property type="entry name" value="EF_HAND_2"/>
    <property type="match status" value="3"/>
</dbReference>
<dbReference type="PROSITE" id="PS50920">
    <property type="entry name" value="SOLCAR"/>
    <property type="match status" value="3"/>
</dbReference>
<accession>Q66L49</accession>